<feature type="chain" id="PRO_0000309094" description="Serine/threonine transporter SstT">
    <location>
        <begin position="1"/>
        <end position="414"/>
    </location>
</feature>
<feature type="transmembrane region" description="Helical" evidence="1">
    <location>
        <begin position="22"/>
        <end position="42"/>
    </location>
</feature>
<feature type="transmembrane region" description="Helical" evidence="1">
    <location>
        <begin position="54"/>
        <end position="74"/>
    </location>
</feature>
<feature type="transmembrane region" description="Helical" evidence="1">
    <location>
        <begin position="89"/>
        <end position="109"/>
    </location>
</feature>
<feature type="transmembrane region" description="Helical" evidence="1">
    <location>
        <begin position="148"/>
        <end position="168"/>
    </location>
</feature>
<feature type="transmembrane region" description="Helical" evidence="1">
    <location>
        <begin position="189"/>
        <end position="209"/>
    </location>
</feature>
<feature type="transmembrane region" description="Helical" evidence="1">
    <location>
        <begin position="223"/>
        <end position="243"/>
    </location>
</feature>
<feature type="transmembrane region" description="Helical" evidence="1">
    <location>
        <begin position="305"/>
        <end position="325"/>
    </location>
</feature>
<feature type="transmembrane region" description="Helical" evidence="1">
    <location>
        <begin position="337"/>
        <end position="357"/>
    </location>
</feature>
<accession>A5UEG3</accession>
<reference key="1">
    <citation type="journal article" date="2007" name="Genome Biol.">
        <title>Characterization and modeling of the Haemophilus influenzae core and supragenomes based on the complete genomic sequences of Rd and 12 clinical nontypeable strains.</title>
        <authorList>
            <person name="Hogg J.S."/>
            <person name="Hu F.Z."/>
            <person name="Janto B."/>
            <person name="Boissy R."/>
            <person name="Hayes J."/>
            <person name="Keefe R."/>
            <person name="Post J.C."/>
            <person name="Ehrlich G.D."/>
        </authorList>
    </citation>
    <scope>NUCLEOTIDE SEQUENCE [LARGE SCALE GENOMIC DNA]</scope>
    <source>
        <strain>PittGG</strain>
    </source>
</reference>
<proteinExistence type="inferred from homology"/>
<sequence length="414" mass="43398">MNTSRLFSLLFQGSLVKRIAAGLVLGIVVALISAPLQETIGFNLAEKVGVLGTIFVKALRAVAPILIFFLVMAALANRKIGTKSNMKEIIVLYLLGTFLAAFVAVIAGFVFPTEVVLAAKEDSSSAPQAVGQVLLTLILNVVDNPLNAIFKANFIGVLAWSIGLGLALRHASDATKNVLSDFAEGVSKIVHVIISFAPFGVFGLVAETLSDKGLVALGGYVQLLAVLIGTMLFTAFVVNPILVYWKIRRNPYPLVWTCVRESGVTAFFTRSSAANIPVNIELAKRLNLDEETYSVSIPLGANINMAGAAITITILTLAAVHTLGLEVSFVSALLLSIVAALCACGASGVAGGSLLLIPLACSLFGISDDVAAQMIGVGFIIGILQDSTETALNSSTDVLFTAAVCMEEERKNAA</sequence>
<comment type="function">
    <text evidence="1">Involved in the import of serine and threonine into the cell, with the concomitant import of sodium (symport system).</text>
</comment>
<comment type="catalytic activity">
    <reaction evidence="1">
        <text>L-serine(in) + Na(+)(in) = L-serine(out) + Na(+)(out)</text>
        <dbReference type="Rhea" id="RHEA:29575"/>
        <dbReference type="ChEBI" id="CHEBI:29101"/>
        <dbReference type="ChEBI" id="CHEBI:33384"/>
    </reaction>
    <physiologicalReaction direction="right-to-left" evidence="1">
        <dbReference type="Rhea" id="RHEA:29577"/>
    </physiologicalReaction>
</comment>
<comment type="catalytic activity">
    <reaction evidence="1">
        <text>L-threonine(in) + Na(+)(in) = L-threonine(out) + Na(+)(out)</text>
        <dbReference type="Rhea" id="RHEA:69999"/>
        <dbReference type="ChEBI" id="CHEBI:29101"/>
        <dbReference type="ChEBI" id="CHEBI:57926"/>
    </reaction>
    <physiologicalReaction direction="right-to-left" evidence="1">
        <dbReference type="Rhea" id="RHEA:70001"/>
    </physiologicalReaction>
</comment>
<comment type="subcellular location">
    <subcellularLocation>
        <location evidence="1">Cell inner membrane</location>
        <topology evidence="1">Multi-pass membrane protein</topology>
    </subcellularLocation>
</comment>
<comment type="similarity">
    <text evidence="1">Belongs to the dicarboxylate/amino acid:cation symporter (DAACS) (TC 2.A.23) family.</text>
</comment>
<gene>
    <name evidence="1" type="primary">sstT</name>
    <name type="ordered locus">CGSHiGG_00230</name>
</gene>
<evidence type="ECO:0000255" key="1">
    <source>
        <dbReference type="HAMAP-Rule" id="MF_01582"/>
    </source>
</evidence>
<keyword id="KW-0029">Amino-acid transport</keyword>
<keyword id="KW-0997">Cell inner membrane</keyword>
<keyword id="KW-1003">Cell membrane</keyword>
<keyword id="KW-0472">Membrane</keyword>
<keyword id="KW-0769">Symport</keyword>
<keyword id="KW-0812">Transmembrane</keyword>
<keyword id="KW-1133">Transmembrane helix</keyword>
<keyword id="KW-0813">Transport</keyword>
<protein>
    <recommendedName>
        <fullName evidence="1">Serine/threonine transporter SstT</fullName>
    </recommendedName>
    <alternativeName>
        <fullName evidence="1">Na(+)/serine-threonine symporter</fullName>
    </alternativeName>
</protein>
<dbReference type="EMBL" id="CP000672">
    <property type="protein sequence ID" value="ABQ99168.1"/>
    <property type="molecule type" value="Genomic_DNA"/>
</dbReference>
<dbReference type="SMR" id="A5UEG3"/>
<dbReference type="KEGG" id="hiq:CGSHiGG_00230"/>
<dbReference type="HOGENOM" id="CLU_044581_0_0_6"/>
<dbReference type="Proteomes" id="UP000001990">
    <property type="component" value="Chromosome"/>
</dbReference>
<dbReference type="GO" id="GO:0005886">
    <property type="term" value="C:plasma membrane"/>
    <property type="evidence" value="ECO:0007669"/>
    <property type="project" value="UniProtKB-SubCell"/>
</dbReference>
<dbReference type="GO" id="GO:0005295">
    <property type="term" value="F:neutral L-amino acid:sodium symporter activity"/>
    <property type="evidence" value="ECO:0007669"/>
    <property type="project" value="TreeGrafter"/>
</dbReference>
<dbReference type="GO" id="GO:0032329">
    <property type="term" value="P:serine transport"/>
    <property type="evidence" value="ECO:0007669"/>
    <property type="project" value="InterPro"/>
</dbReference>
<dbReference type="GO" id="GO:0015826">
    <property type="term" value="P:threonine transport"/>
    <property type="evidence" value="ECO:0007669"/>
    <property type="project" value="InterPro"/>
</dbReference>
<dbReference type="FunFam" id="1.10.3860.10:FF:000003">
    <property type="entry name" value="Serine/threonine transporter sstT"/>
    <property type="match status" value="1"/>
</dbReference>
<dbReference type="Gene3D" id="1.10.3860.10">
    <property type="entry name" value="Sodium:dicarboxylate symporter"/>
    <property type="match status" value="1"/>
</dbReference>
<dbReference type="HAMAP" id="MF_01582">
    <property type="entry name" value="Ser_Thr_transp_SstT"/>
    <property type="match status" value="1"/>
</dbReference>
<dbReference type="InterPro" id="IPR001991">
    <property type="entry name" value="Na-dicarboxylate_symporter"/>
</dbReference>
<dbReference type="InterPro" id="IPR036458">
    <property type="entry name" value="Na:dicarbo_symporter_sf"/>
</dbReference>
<dbReference type="InterPro" id="IPR023025">
    <property type="entry name" value="Ser_Thr_transp_SstT"/>
</dbReference>
<dbReference type="NCBIfam" id="NF010151">
    <property type="entry name" value="PRK13628.1"/>
    <property type="match status" value="1"/>
</dbReference>
<dbReference type="PANTHER" id="PTHR42865">
    <property type="entry name" value="PROTON/GLUTAMATE-ASPARTATE SYMPORTER"/>
    <property type="match status" value="1"/>
</dbReference>
<dbReference type="PANTHER" id="PTHR42865:SF8">
    <property type="entry name" value="SERINE_THREONINE TRANSPORTER SSTT"/>
    <property type="match status" value="1"/>
</dbReference>
<dbReference type="Pfam" id="PF00375">
    <property type="entry name" value="SDF"/>
    <property type="match status" value="1"/>
</dbReference>
<dbReference type="PRINTS" id="PR00173">
    <property type="entry name" value="EDTRNSPORT"/>
</dbReference>
<dbReference type="SUPFAM" id="SSF118215">
    <property type="entry name" value="Proton glutamate symport protein"/>
    <property type="match status" value="1"/>
</dbReference>
<organism>
    <name type="scientific">Haemophilus influenzae (strain PittGG)</name>
    <dbReference type="NCBI Taxonomy" id="374931"/>
    <lineage>
        <taxon>Bacteria</taxon>
        <taxon>Pseudomonadati</taxon>
        <taxon>Pseudomonadota</taxon>
        <taxon>Gammaproteobacteria</taxon>
        <taxon>Pasteurellales</taxon>
        <taxon>Pasteurellaceae</taxon>
        <taxon>Haemophilus</taxon>
    </lineage>
</organism>
<name>SSTT_HAEIG</name>